<accession>A5FEC6</accession>
<proteinExistence type="inferred from homology"/>
<protein>
    <recommendedName>
        <fullName evidence="1">N-acetyl-gamma-glutamyl-phosphate reductase</fullName>
        <shortName evidence="1">AGPR</shortName>
        <ecNumber evidence="1">1.2.1.38</ecNumber>
    </recommendedName>
    <alternativeName>
        <fullName evidence="1">N-acetyl-glutamate semialdehyde dehydrogenase</fullName>
        <shortName evidence="1">NAGSA dehydrogenase</shortName>
    </alternativeName>
</protein>
<gene>
    <name evidence="1" type="primary">argC</name>
    <name type="ordered locus">Fjoh_3434</name>
</gene>
<dbReference type="EC" id="1.2.1.38" evidence="1"/>
<dbReference type="EMBL" id="CP000685">
    <property type="protein sequence ID" value="ABQ06448.1"/>
    <property type="molecule type" value="Genomic_DNA"/>
</dbReference>
<dbReference type="RefSeq" id="WP_012025417.1">
    <property type="nucleotide sequence ID" value="NC_009441.1"/>
</dbReference>
<dbReference type="SMR" id="A5FEC6"/>
<dbReference type="STRING" id="376686.Fjoh_3434"/>
<dbReference type="KEGG" id="fjo:Fjoh_3434"/>
<dbReference type="eggNOG" id="COG0002">
    <property type="taxonomic scope" value="Bacteria"/>
</dbReference>
<dbReference type="HOGENOM" id="CLU_006384_0_1_10"/>
<dbReference type="OrthoDB" id="9801289at2"/>
<dbReference type="UniPathway" id="UPA00068">
    <property type="reaction ID" value="UER00108"/>
</dbReference>
<dbReference type="Proteomes" id="UP000006694">
    <property type="component" value="Chromosome"/>
</dbReference>
<dbReference type="GO" id="GO:0005737">
    <property type="term" value="C:cytoplasm"/>
    <property type="evidence" value="ECO:0007669"/>
    <property type="project" value="UniProtKB-SubCell"/>
</dbReference>
<dbReference type="GO" id="GO:0003942">
    <property type="term" value="F:N-acetyl-gamma-glutamyl-phosphate reductase activity"/>
    <property type="evidence" value="ECO:0007669"/>
    <property type="project" value="UniProtKB-UniRule"/>
</dbReference>
<dbReference type="GO" id="GO:0051287">
    <property type="term" value="F:NAD binding"/>
    <property type="evidence" value="ECO:0007669"/>
    <property type="project" value="InterPro"/>
</dbReference>
<dbReference type="GO" id="GO:0070401">
    <property type="term" value="F:NADP+ binding"/>
    <property type="evidence" value="ECO:0007669"/>
    <property type="project" value="InterPro"/>
</dbReference>
<dbReference type="GO" id="GO:0006526">
    <property type="term" value="P:L-arginine biosynthetic process"/>
    <property type="evidence" value="ECO:0007669"/>
    <property type="project" value="UniProtKB-UniRule"/>
</dbReference>
<dbReference type="CDD" id="cd23934">
    <property type="entry name" value="AGPR_1_C"/>
    <property type="match status" value="1"/>
</dbReference>
<dbReference type="CDD" id="cd17895">
    <property type="entry name" value="AGPR_1_N"/>
    <property type="match status" value="1"/>
</dbReference>
<dbReference type="Gene3D" id="3.30.360.10">
    <property type="entry name" value="Dihydrodipicolinate Reductase, domain 2"/>
    <property type="match status" value="1"/>
</dbReference>
<dbReference type="Gene3D" id="3.40.50.720">
    <property type="entry name" value="NAD(P)-binding Rossmann-like Domain"/>
    <property type="match status" value="1"/>
</dbReference>
<dbReference type="HAMAP" id="MF_00150">
    <property type="entry name" value="ArgC_type1"/>
    <property type="match status" value="1"/>
</dbReference>
<dbReference type="InterPro" id="IPR023013">
    <property type="entry name" value="AGPR_AS"/>
</dbReference>
<dbReference type="InterPro" id="IPR000706">
    <property type="entry name" value="AGPR_type-1"/>
</dbReference>
<dbReference type="InterPro" id="IPR036291">
    <property type="entry name" value="NAD(P)-bd_dom_sf"/>
</dbReference>
<dbReference type="InterPro" id="IPR050085">
    <property type="entry name" value="NAGSA_dehydrogenase"/>
</dbReference>
<dbReference type="InterPro" id="IPR000534">
    <property type="entry name" value="Semialdehyde_DH_NAD-bd"/>
</dbReference>
<dbReference type="NCBIfam" id="TIGR01850">
    <property type="entry name" value="argC"/>
    <property type="match status" value="1"/>
</dbReference>
<dbReference type="PANTHER" id="PTHR32338:SF10">
    <property type="entry name" value="N-ACETYL-GAMMA-GLUTAMYL-PHOSPHATE REDUCTASE, CHLOROPLASTIC-RELATED"/>
    <property type="match status" value="1"/>
</dbReference>
<dbReference type="PANTHER" id="PTHR32338">
    <property type="entry name" value="N-ACETYL-GAMMA-GLUTAMYL-PHOSPHATE REDUCTASE, CHLOROPLASTIC-RELATED-RELATED"/>
    <property type="match status" value="1"/>
</dbReference>
<dbReference type="Pfam" id="PF01118">
    <property type="entry name" value="Semialdhyde_dh"/>
    <property type="match status" value="1"/>
</dbReference>
<dbReference type="Pfam" id="PF22698">
    <property type="entry name" value="Semialdhyde_dhC_1"/>
    <property type="match status" value="1"/>
</dbReference>
<dbReference type="SMART" id="SM00859">
    <property type="entry name" value="Semialdhyde_dh"/>
    <property type="match status" value="1"/>
</dbReference>
<dbReference type="SUPFAM" id="SSF55347">
    <property type="entry name" value="Glyceraldehyde-3-phosphate dehydrogenase-like, C-terminal domain"/>
    <property type="match status" value="1"/>
</dbReference>
<dbReference type="SUPFAM" id="SSF51735">
    <property type="entry name" value="NAD(P)-binding Rossmann-fold domains"/>
    <property type="match status" value="1"/>
</dbReference>
<dbReference type="PROSITE" id="PS01224">
    <property type="entry name" value="ARGC"/>
    <property type="match status" value="1"/>
</dbReference>
<organism>
    <name type="scientific">Flavobacterium johnsoniae (strain ATCC 17061 / DSM 2064 / JCM 8514 / BCRC 14874 / CCUG 350202 / NBRC 14942 / NCIMB 11054 / UW101)</name>
    <name type="common">Cytophaga johnsonae</name>
    <dbReference type="NCBI Taxonomy" id="376686"/>
    <lineage>
        <taxon>Bacteria</taxon>
        <taxon>Pseudomonadati</taxon>
        <taxon>Bacteroidota</taxon>
        <taxon>Flavobacteriia</taxon>
        <taxon>Flavobacteriales</taxon>
        <taxon>Flavobacteriaceae</taxon>
        <taxon>Flavobacterium</taxon>
    </lineage>
</organism>
<keyword id="KW-0028">Amino-acid biosynthesis</keyword>
<keyword id="KW-0055">Arginine biosynthesis</keyword>
<keyword id="KW-0963">Cytoplasm</keyword>
<keyword id="KW-0521">NADP</keyword>
<keyword id="KW-0560">Oxidoreductase</keyword>
<sequence length="325" mass="36014">MINVGIIGGSGYTAGELIRILMYHPKVNIDFVYSTTNAGKPLSVAHHDLMGDIEMNFTAEINPNVNVVFLCLGHGKSISFLKENQFASHTKIIDLGNDFRLNKDAHFEGKDFVYGLPEINKAEIKKTNYIANPGCFATAIQLALLPLAKHNLLNNDVHINATTGSTGAGVSLSETSHFSWRNNNMSHYKAFEHQHLGEIGESLVQLQDDFDSELLFIPNRGDFPRGIFATLYTLCDDSLEQLVAKYEEFYKNEPFVTVTTTNINMKQVVQTNKCIISLLKKGNRVLITSIIDNLTKGASGQAIQNMNLMFGLEETTGLHLKPSGF</sequence>
<name>ARGC_FLAJ1</name>
<feature type="chain" id="PRO_1000076732" description="N-acetyl-gamma-glutamyl-phosphate reductase">
    <location>
        <begin position="1"/>
        <end position="325"/>
    </location>
</feature>
<feature type="active site" evidence="1">
    <location>
        <position position="135"/>
    </location>
</feature>
<comment type="function">
    <text evidence="1">Catalyzes the NADPH-dependent reduction of N-acetyl-5-glutamyl phosphate to yield N-acetyl-L-glutamate 5-semialdehyde.</text>
</comment>
<comment type="catalytic activity">
    <reaction evidence="1">
        <text>N-acetyl-L-glutamate 5-semialdehyde + phosphate + NADP(+) = N-acetyl-L-glutamyl 5-phosphate + NADPH + H(+)</text>
        <dbReference type="Rhea" id="RHEA:21588"/>
        <dbReference type="ChEBI" id="CHEBI:15378"/>
        <dbReference type="ChEBI" id="CHEBI:29123"/>
        <dbReference type="ChEBI" id="CHEBI:43474"/>
        <dbReference type="ChEBI" id="CHEBI:57783"/>
        <dbReference type="ChEBI" id="CHEBI:57936"/>
        <dbReference type="ChEBI" id="CHEBI:58349"/>
        <dbReference type="EC" id="1.2.1.38"/>
    </reaction>
</comment>
<comment type="pathway">
    <text evidence="1">Amino-acid biosynthesis; L-arginine biosynthesis; N(2)-acetyl-L-ornithine from L-glutamate: step 3/4.</text>
</comment>
<comment type="subcellular location">
    <subcellularLocation>
        <location evidence="1">Cytoplasm</location>
    </subcellularLocation>
</comment>
<comment type="similarity">
    <text evidence="1">Belongs to the NAGSA dehydrogenase family. Type 1 subfamily.</text>
</comment>
<reference key="1">
    <citation type="journal article" date="2009" name="Appl. Environ. Microbiol.">
        <title>Novel features of the polysaccharide-digesting gliding bacterium Flavobacterium johnsoniae as revealed by genome sequence analysis.</title>
        <authorList>
            <person name="McBride M.J."/>
            <person name="Xie G."/>
            <person name="Martens E.C."/>
            <person name="Lapidus A."/>
            <person name="Henrissat B."/>
            <person name="Rhodes R.G."/>
            <person name="Goltsman E."/>
            <person name="Wang W."/>
            <person name="Xu J."/>
            <person name="Hunnicutt D.W."/>
            <person name="Staroscik A.M."/>
            <person name="Hoover T.R."/>
            <person name="Cheng Y.Q."/>
            <person name="Stein J.L."/>
        </authorList>
    </citation>
    <scope>NUCLEOTIDE SEQUENCE [LARGE SCALE GENOMIC DNA]</scope>
    <source>
        <strain>ATCC 17061 / DSM 2064 / JCM 8514 / BCRC 14874 / CCUG 350202 / NBRC 14942 / NCIMB 11054 / UW101</strain>
    </source>
</reference>
<evidence type="ECO:0000255" key="1">
    <source>
        <dbReference type="HAMAP-Rule" id="MF_00150"/>
    </source>
</evidence>